<organism>
    <name type="scientific">Equus caballus</name>
    <name type="common">Horse</name>
    <dbReference type="NCBI Taxonomy" id="9796"/>
    <lineage>
        <taxon>Eukaryota</taxon>
        <taxon>Metazoa</taxon>
        <taxon>Chordata</taxon>
        <taxon>Craniata</taxon>
        <taxon>Vertebrata</taxon>
        <taxon>Euteleostomi</taxon>
        <taxon>Mammalia</taxon>
        <taxon>Eutheria</taxon>
        <taxon>Laurasiatheria</taxon>
        <taxon>Perissodactyla</taxon>
        <taxon>Equidae</taxon>
        <taxon>Equus</taxon>
    </lineage>
</organism>
<keyword id="KW-0002">3D-structure</keyword>
<keyword id="KW-0020">Allergen</keyword>
<keyword id="KW-0903">Direct protein sequencing</keyword>
<keyword id="KW-1015">Disulfide bond</keyword>
<keyword id="KW-0325">Glycoprotein</keyword>
<keyword id="KW-1185">Reference proteome</keyword>
<keyword id="KW-0964">Secreted</keyword>
<keyword id="KW-0732">Signal</keyword>
<keyword id="KW-0813">Transport</keyword>
<evidence type="ECO:0000255" key="1"/>
<evidence type="ECO:0000269" key="2">
    <source>
    </source>
</evidence>
<evidence type="ECO:0000269" key="3">
    <source>
    </source>
</evidence>
<evidence type="ECO:0000305" key="4"/>
<evidence type="ECO:0007829" key="5">
    <source>
        <dbReference type="PDB" id="1EW3"/>
    </source>
</evidence>
<feature type="signal peptide" description="Or 16, or 21">
    <location>
        <begin position="1"/>
        <end position="15"/>
    </location>
</feature>
<feature type="chain" id="PRO_0000017982" description="Major allergen Equ c 1">
    <location>
        <begin position="16"/>
        <end position="187"/>
    </location>
</feature>
<feature type="glycosylation site" description="N-linked (GlcNAc...) asparagine" evidence="1">
    <location>
        <position position="53"/>
    </location>
</feature>
<feature type="glycosylation site" description="N-linked (GlcNAc...) asparagine" evidence="1">
    <location>
        <position position="68"/>
    </location>
</feature>
<feature type="disulfide bond">
    <location>
        <begin position="83"/>
        <end position="176"/>
    </location>
</feature>
<feature type="sequence variant">
    <original>V</original>
    <variation>L</variation>
    <location>
        <position position="62"/>
    </location>
</feature>
<feature type="sequence variant">
    <original>F</original>
    <variation>A</variation>
    <location>
        <position position="90"/>
    </location>
</feature>
<feature type="sequence variant">
    <original>F</original>
    <variation>L</variation>
    <location>
        <position position="136"/>
    </location>
</feature>
<feature type="sequence variant">
    <original>S</original>
    <variation>D</variation>
    <location>
        <position position="146"/>
    </location>
</feature>
<feature type="sequence variant">
    <original>KI</original>
    <variation>QT</variation>
    <location>
        <begin position="172"/>
        <end position="173"/>
    </location>
</feature>
<feature type="strand" evidence="5">
    <location>
        <begin position="25"/>
        <end position="27"/>
    </location>
</feature>
<feature type="helix" evidence="5">
    <location>
        <begin position="30"/>
        <end position="32"/>
    </location>
</feature>
<feature type="strand" evidence="5">
    <location>
        <begin position="38"/>
        <end position="46"/>
    </location>
</feature>
<feature type="helix" evidence="5">
    <location>
        <begin position="47"/>
        <end position="49"/>
    </location>
</feature>
<feature type="strand" evidence="5">
    <location>
        <begin position="59"/>
        <end position="65"/>
    </location>
</feature>
<feature type="strand" evidence="5">
    <location>
        <begin position="71"/>
        <end position="79"/>
    </location>
</feature>
<feature type="strand" evidence="5">
    <location>
        <begin position="82"/>
        <end position="92"/>
    </location>
</feature>
<feature type="strand" evidence="5">
    <location>
        <begin position="98"/>
        <end position="116"/>
    </location>
</feature>
<feature type="strand" evidence="5">
    <location>
        <begin position="119"/>
        <end position="126"/>
    </location>
</feature>
<feature type="strand" evidence="5">
    <location>
        <begin position="133"/>
        <end position="144"/>
    </location>
</feature>
<feature type="helix" evidence="5">
    <location>
        <begin position="147"/>
        <end position="159"/>
    </location>
</feature>
<feature type="helix" evidence="5">
    <location>
        <begin position="164"/>
        <end position="166"/>
    </location>
</feature>
<feature type="strand" evidence="5">
    <location>
        <begin position="167"/>
        <end position="169"/>
    </location>
</feature>
<feature type="helix" evidence="5">
    <location>
        <begin position="170"/>
        <end position="172"/>
    </location>
</feature>
<feature type="helix" evidence="5">
    <location>
        <begin position="177"/>
        <end position="179"/>
    </location>
</feature>
<comment type="subunit">
    <text>Homodimer.</text>
</comment>
<comment type="subcellular location">
    <subcellularLocation>
        <location>Secreted</location>
    </subcellularLocation>
</comment>
<comment type="tissue specificity">
    <text>Expressed in liver and in sublingual and submaxillary salivary glands. Highly concentrated in secretory fluid such as saliva and urine as well as in hair dandruff extract.</text>
</comment>
<comment type="PTM">
    <text>Several N-terminal ends may be due to cleavage by signal peptidase at different sites or may be generated by proteolytic processing of the secreted protein.</text>
</comment>
<comment type="PTM">
    <text>Analysis of the sugar composition shows the presence of GalNAc, Gal, NeuAc, GlcNAc, and Man. May be also O-glycosylated.</text>
</comment>
<comment type="mass spectrometry" mass="22000.0" method="Electrospray" evidence="2"/>
<comment type="allergen">
    <text evidence="3">Causes an allergic reaction in human. Potent allergen responsible for about 80% of anti-horse IgE antibody response in patients who are chronically exposed to horse allergens.</text>
</comment>
<comment type="similarity">
    <text evidence="4">Belongs to the calycin superfamily. Lipocalin family.</text>
</comment>
<sequence length="187" mass="21696">MKLLLLCLGLILVCAQQEENSDVAIRNFDISKISGEWYSIFLASDVKEKIEENGSMRVFVDVIRALDNSSLYAEYQTKVNGECTEFPMVFDKTEEDGVYSLNYDGYNVFRISEFENDEHIILYLVNFDKDRPFQLFEFYAREPDVSPEIKEEFVKIVQKRGIVKENIIDLTKIDRCFQLRGNGVAQA</sequence>
<reference key="1">
    <citation type="journal article" date="1996" name="J. Biol. Chem.">
        <title>cDNA cloning and sequencing reveal the major horse allergen Equ c1 to be a glycoprotein member of the lipocalin superfamily.</title>
        <authorList>
            <person name="Gregoire C."/>
            <person name="Rosinski-Chupin I."/>
            <person name="Rabillon J."/>
            <person name="Alzari P.M."/>
            <person name="David B."/>
            <person name="Dandeu J.-P."/>
        </authorList>
    </citation>
    <scope>NUCLEOTIDE SEQUENCE [MRNA]</scope>
    <scope>PARTIAL PROTEIN SEQUENCE</scope>
    <scope>ALLERGEN</scope>
    <source>
        <tissue>Hair</tissue>
        <tissue>Sublingual gland</tissue>
    </source>
</reference>
<reference key="2">
    <citation type="journal article" date="2000" name="J. Biol. Chem.">
        <title>Crystal structure of the allergen Equ c 1: a dimeric lipocalin with restricted IgE-reactive epitopes.</title>
        <authorList>
            <person name="Lascombe M.-B."/>
            <person name="Gregoire C."/>
            <person name="Poncet P."/>
            <person name="Tavares G.A."/>
            <person name="Rosinski-Chupin I."/>
            <person name="Rabillon J."/>
            <person name="Goubran-Botros H."/>
            <person name="Mazie J.-C."/>
            <person name="David B."/>
            <person name="Alzari P.M."/>
        </authorList>
    </citation>
    <scope>X-RAY CRYSTALLOGRAPHY (2.3 ANGSTROMS) OF 23-181</scope>
    <source>
        <tissue>Salivary gland</tissue>
    </source>
</reference>
<reference key="3">
    <citation type="journal article" date="2001" name="Eur. J. Biochem.">
        <title>Biochemical characterization and surfactant properties of horse allergens.</title>
        <authorList>
            <person name="Goubran Botros H."/>
            <person name="Poncet P."/>
            <person name="Rabillon J."/>
            <person name="Fontaine T."/>
            <person name="Laval J.-M."/>
            <person name="David B."/>
        </authorList>
    </citation>
    <scope>MASS SPECTROMETRY</scope>
    <source>
        <tissue>Dander</tissue>
    </source>
</reference>
<protein>
    <recommendedName>
        <fullName>Major allergen Equ c 1</fullName>
    </recommendedName>
    <allergenName>Equ c 1</allergenName>
</protein>
<dbReference type="EMBL" id="U70823">
    <property type="protein sequence ID" value="AAC48691.1"/>
    <property type="molecule type" value="mRNA"/>
</dbReference>
<dbReference type="RefSeq" id="NP_001075966.1">
    <property type="nucleotide sequence ID" value="NM_001082497.2"/>
</dbReference>
<dbReference type="PDB" id="1EW3">
    <property type="method" value="X-ray"/>
    <property type="resolution" value="2.30 A"/>
    <property type="chains" value="A=23-181"/>
</dbReference>
<dbReference type="PDBsum" id="1EW3"/>
<dbReference type="SMR" id="Q95182"/>
<dbReference type="FunCoup" id="Q95182">
    <property type="interactions" value="5"/>
</dbReference>
<dbReference type="STRING" id="9796.ENSECAP00000049682"/>
<dbReference type="Allergome" id="3306">
    <property type="allergen name" value="Equ c 1.0101"/>
</dbReference>
<dbReference type="Allergome" id="331">
    <property type="allergen name" value="Equ c 1"/>
</dbReference>
<dbReference type="PaxDb" id="9796-ENSECAP00000049682"/>
<dbReference type="Ensembl" id="ENSECAT00000000508.3">
    <property type="protein sequence ID" value="ENSECAP00000000397.2"/>
    <property type="gene ID" value="ENSECAG00000034517.3"/>
</dbReference>
<dbReference type="GeneID" id="100034197"/>
<dbReference type="KEGG" id="ecb:100034197"/>
<dbReference type="GeneTree" id="ENSGT01050000244868"/>
<dbReference type="HOGENOM" id="CLU_094061_4_0_1"/>
<dbReference type="InParanoid" id="Q95182"/>
<dbReference type="OMA" id="FHTKVNG"/>
<dbReference type="OrthoDB" id="9048943at2759"/>
<dbReference type="EvolutionaryTrace" id="Q95182"/>
<dbReference type="Proteomes" id="UP000002281">
    <property type="component" value="Chromosome 25"/>
</dbReference>
<dbReference type="Bgee" id="ENSECAG00000034517">
    <property type="expression patterns" value="Expressed in zone of skin and 10 other cell types or tissues"/>
</dbReference>
<dbReference type="GO" id="GO:0005615">
    <property type="term" value="C:extracellular space"/>
    <property type="evidence" value="ECO:0000318"/>
    <property type="project" value="GO_Central"/>
</dbReference>
<dbReference type="GO" id="GO:0005549">
    <property type="term" value="F:odorant binding"/>
    <property type="evidence" value="ECO:0000318"/>
    <property type="project" value="GO_Central"/>
</dbReference>
<dbReference type="GO" id="GO:0036094">
    <property type="term" value="F:small molecule binding"/>
    <property type="evidence" value="ECO:0007669"/>
    <property type="project" value="InterPro"/>
</dbReference>
<dbReference type="CDD" id="cd19428">
    <property type="entry name" value="lipocalin_MUP-like"/>
    <property type="match status" value="1"/>
</dbReference>
<dbReference type="FunFam" id="2.40.128.20:FF:000008">
    <property type="entry name" value="Major urinary protein"/>
    <property type="match status" value="1"/>
</dbReference>
<dbReference type="Gene3D" id="2.40.128.20">
    <property type="match status" value="1"/>
</dbReference>
<dbReference type="InterPro" id="IPR012674">
    <property type="entry name" value="Calycin"/>
</dbReference>
<dbReference type="InterPro" id="IPR002345">
    <property type="entry name" value="Lipocalin"/>
</dbReference>
<dbReference type="InterPro" id="IPR022272">
    <property type="entry name" value="Lipocalin_CS"/>
</dbReference>
<dbReference type="InterPro" id="IPR000566">
    <property type="entry name" value="Lipocln_cytosolic_FA-bd_dom"/>
</dbReference>
<dbReference type="InterPro" id="IPR002971">
    <property type="entry name" value="Maj_urinary"/>
</dbReference>
<dbReference type="PANTHER" id="PTHR11430">
    <property type="entry name" value="LIPOCALIN"/>
    <property type="match status" value="1"/>
</dbReference>
<dbReference type="PANTHER" id="PTHR11430:SF76">
    <property type="entry name" value="MAJOR URINARY PROTEIN 1-RELATED"/>
    <property type="match status" value="1"/>
</dbReference>
<dbReference type="Pfam" id="PF00061">
    <property type="entry name" value="Lipocalin"/>
    <property type="match status" value="1"/>
</dbReference>
<dbReference type="PRINTS" id="PR00179">
    <property type="entry name" value="LIPOCALIN"/>
</dbReference>
<dbReference type="PRINTS" id="PR01221">
    <property type="entry name" value="MAJORURINARY"/>
</dbReference>
<dbReference type="SUPFAM" id="SSF50814">
    <property type="entry name" value="Lipocalins"/>
    <property type="match status" value="1"/>
</dbReference>
<dbReference type="PROSITE" id="PS00213">
    <property type="entry name" value="LIPOCALIN"/>
    <property type="match status" value="1"/>
</dbReference>
<proteinExistence type="evidence at protein level"/>
<name>ALL1_HORSE</name>
<accession>Q95182</accession>